<sequence>MMKIKITKSTILLIISFLFILAIMAYIGLDKIIKVLINTNPEYVILAFILQILVSVILSARWKFIIKILGYSANFKNIFLLVLMGLFINNITPSMRGGGEAFRAYYLSKLEEIPKGLAFSTVVVERVLDTAIFLFFTLFVIGYFVVTGFKYLEYLILSWIFLFSLTAIIIYLIANKGLLIKTVTKISKFICKYCSYNYDETKILQSIEEFYNSMKFFKNKRGWEVVVAIFLSVMRYIFDILKLWLLFLSLSYVVSVICVSAVYLITLLSGVLSITPSGFGTADTVMILSFSAFNIPPSVAAAVTLLDRLVSYILPTILGYIAMLIIKREIDKKKGK</sequence>
<accession>Q58990</accession>
<name>Y1595_METJA</name>
<gene>
    <name type="ordered locus">MJ1595</name>
</gene>
<reference key="1">
    <citation type="journal article" date="1996" name="Science">
        <title>Complete genome sequence of the methanogenic archaeon, Methanococcus jannaschii.</title>
        <authorList>
            <person name="Bult C.J."/>
            <person name="White O."/>
            <person name="Olsen G.J."/>
            <person name="Zhou L."/>
            <person name="Fleischmann R.D."/>
            <person name="Sutton G.G."/>
            <person name="Blake J.A."/>
            <person name="FitzGerald L.M."/>
            <person name="Clayton R.A."/>
            <person name="Gocayne J.D."/>
            <person name="Kerlavage A.R."/>
            <person name="Dougherty B.A."/>
            <person name="Tomb J.-F."/>
            <person name="Adams M.D."/>
            <person name="Reich C.I."/>
            <person name="Overbeek R."/>
            <person name="Kirkness E.F."/>
            <person name="Weinstock K.G."/>
            <person name="Merrick J.M."/>
            <person name="Glodek A."/>
            <person name="Scott J.L."/>
            <person name="Geoghagen N.S.M."/>
            <person name="Weidman J.F."/>
            <person name="Fuhrmann J.L."/>
            <person name="Nguyen D."/>
            <person name="Utterback T.R."/>
            <person name="Kelley J.M."/>
            <person name="Peterson J.D."/>
            <person name="Sadow P.W."/>
            <person name="Hanna M.C."/>
            <person name="Cotton M.D."/>
            <person name="Roberts K.M."/>
            <person name="Hurst M.A."/>
            <person name="Kaine B.P."/>
            <person name="Borodovsky M."/>
            <person name="Klenk H.-P."/>
            <person name="Fraser C.M."/>
            <person name="Smith H.O."/>
            <person name="Woese C.R."/>
            <person name="Venter J.C."/>
        </authorList>
    </citation>
    <scope>NUCLEOTIDE SEQUENCE [LARGE SCALE GENOMIC DNA]</scope>
    <source>
        <strain>ATCC 43067 / DSM 2661 / JAL-1 / JCM 10045 / NBRC 100440</strain>
    </source>
</reference>
<comment type="subcellular location">
    <subcellularLocation>
        <location evidence="2">Cell membrane</location>
        <topology evidence="2">Multi-pass membrane protein</topology>
    </subcellularLocation>
</comment>
<comment type="similarity">
    <text evidence="2">Belongs to the UPF0104 family.</text>
</comment>
<proteinExistence type="inferred from homology"/>
<evidence type="ECO:0000255" key="1"/>
<evidence type="ECO:0000305" key="2"/>
<protein>
    <recommendedName>
        <fullName>UPF0104 membrane protein MJ1595</fullName>
    </recommendedName>
</protein>
<dbReference type="EMBL" id="L77117">
    <property type="protein sequence ID" value="AAB99613.1"/>
    <property type="molecule type" value="Genomic_DNA"/>
</dbReference>
<dbReference type="PIR" id="B64499">
    <property type="entry name" value="B64499"/>
</dbReference>
<dbReference type="SMR" id="Q58990"/>
<dbReference type="FunCoup" id="Q58990">
    <property type="interactions" value="1"/>
</dbReference>
<dbReference type="STRING" id="243232.MJ_1595"/>
<dbReference type="PaxDb" id="243232-MJ_1595"/>
<dbReference type="EnsemblBacteria" id="AAB99613">
    <property type="protein sequence ID" value="AAB99613"/>
    <property type="gene ID" value="MJ_1595"/>
</dbReference>
<dbReference type="KEGG" id="mja:MJ_1595"/>
<dbReference type="eggNOG" id="arCOG00899">
    <property type="taxonomic scope" value="Archaea"/>
</dbReference>
<dbReference type="HOGENOM" id="CLU_048072_1_1_2"/>
<dbReference type="InParanoid" id="Q58990"/>
<dbReference type="PhylomeDB" id="Q58990"/>
<dbReference type="Proteomes" id="UP000000805">
    <property type="component" value="Chromosome"/>
</dbReference>
<dbReference type="GO" id="GO:0005886">
    <property type="term" value="C:plasma membrane"/>
    <property type="evidence" value="ECO:0007669"/>
    <property type="project" value="UniProtKB-SubCell"/>
</dbReference>
<dbReference type="InterPro" id="IPR022791">
    <property type="entry name" value="L-PG_synthase/AglD"/>
</dbReference>
<dbReference type="NCBIfam" id="TIGR00374">
    <property type="entry name" value="flippase-like domain"/>
    <property type="match status" value="1"/>
</dbReference>
<dbReference type="PANTHER" id="PTHR39087">
    <property type="entry name" value="UPF0104 MEMBRANE PROTEIN MJ1595"/>
    <property type="match status" value="1"/>
</dbReference>
<dbReference type="PANTHER" id="PTHR39087:SF2">
    <property type="entry name" value="UPF0104 MEMBRANE PROTEIN MJ1595"/>
    <property type="match status" value="1"/>
</dbReference>
<dbReference type="Pfam" id="PF03706">
    <property type="entry name" value="LPG_synthase_TM"/>
    <property type="match status" value="1"/>
</dbReference>
<feature type="chain" id="PRO_0000138105" description="UPF0104 membrane protein MJ1595">
    <location>
        <begin position="1"/>
        <end position="336"/>
    </location>
</feature>
<feature type="transmembrane region" description="Helical" evidence="1">
    <location>
        <begin position="9"/>
        <end position="29"/>
    </location>
</feature>
<feature type="transmembrane region" description="Helical" evidence="1">
    <location>
        <begin position="40"/>
        <end position="60"/>
    </location>
</feature>
<feature type="transmembrane region" description="Helical" evidence="1">
    <location>
        <begin position="68"/>
        <end position="88"/>
    </location>
</feature>
<feature type="transmembrane region" description="Helical" evidence="1">
    <location>
        <begin position="127"/>
        <end position="147"/>
    </location>
</feature>
<feature type="transmembrane region" description="Helical" evidence="1">
    <location>
        <begin position="154"/>
        <end position="174"/>
    </location>
</feature>
<feature type="transmembrane region" description="Helical" evidence="1">
    <location>
        <begin position="223"/>
        <end position="243"/>
    </location>
</feature>
<feature type="transmembrane region" description="Helical" evidence="1">
    <location>
        <begin position="245"/>
        <end position="265"/>
    </location>
</feature>
<feature type="transmembrane region" description="Helical" evidence="1">
    <location>
        <begin position="285"/>
        <end position="305"/>
    </location>
</feature>
<feature type="transmembrane region" description="Helical" evidence="1">
    <location>
        <begin position="306"/>
        <end position="326"/>
    </location>
</feature>
<keyword id="KW-1003">Cell membrane</keyword>
<keyword id="KW-0472">Membrane</keyword>
<keyword id="KW-1185">Reference proteome</keyword>
<keyword id="KW-0812">Transmembrane</keyword>
<keyword id="KW-1133">Transmembrane helix</keyword>
<organism>
    <name type="scientific">Methanocaldococcus jannaschii (strain ATCC 43067 / DSM 2661 / JAL-1 / JCM 10045 / NBRC 100440)</name>
    <name type="common">Methanococcus jannaschii</name>
    <dbReference type="NCBI Taxonomy" id="243232"/>
    <lineage>
        <taxon>Archaea</taxon>
        <taxon>Methanobacteriati</taxon>
        <taxon>Methanobacteriota</taxon>
        <taxon>Methanomada group</taxon>
        <taxon>Methanococci</taxon>
        <taxon>Methanococcales</taxon>
        <taxon>Methanocaldococcaceae</taxon>
        <taxon>Methanocaldococcus</taxon>
    </lineage>
</organism>